<gene>
    <name evidence="1" type="primary">lysS</name>
    <name type="ordered locus">THA_1523</name>
</gene>
<dbReference type="EC" id="6.1.1.6" evidence="1"/>
<dbReference type="EMBL" id="CP001185">
    <property type="protein sequence ID" value="ACJ75964.1"/>
    <property type="molecule type" value="Genomic_DNA"/>
</dbReference>
<dbReference type="RefSeq" id="WP_004102053.1">
    <property type="nucleotide sequence ID" value="NC_011653.1"/>
</dbReference>
<dbReference type="SMR" id="B7ID87"/>
<dbReference type="STRING" id="484019.THA_1523"/>
<dbReference type="KEGG" id="taf:THA_1523"/>
<dbReference type="eggNOG" id="COG1190">
    <property type="taxonomic scope" value="Bacteria"/>
</dbReference>
<dbReference type="HOGENOM" id="CLU_008255_6_0_0"/>
<dbReference type="OrthoDB" id="9802326at2"/>
<dbReference type="Proteomes" id="UP000002453">
    <property type="component" value="Chromosome"/>
</dbReference>
<dbReference type="GO" id="GO:0005829">
    <property type="term" value="C:cytosol"/>
    <property type="evidence" value="ECO:0007669"/>
    <property type="project" value="TreeGrafter"/>
</dbReference>
<dbReference type="GO" id="GO:0005524">
    <property type="term" value="F:ATP binding"/>
    <property type="evidence" value="ECO:0007669"/>
    <property type="project" value="UniProtKB-UniRule"/>
</dbReference>
<dbReference type="GO" id="GO:0004824">
    <property type="term" value="F:lysine-tRNA ligase activity"/>
    <property type="evidence" value="ECO:0007669"/>
    <property type="project" value="UniProtKB-UniRule"/>
</dbReference>
<dbReference type="GO" id="GO:0000287">
    <property type="term" value="F:magnesium ion binding"/>
    <property type="evidence" value="ECO:0007669"/>
    <property type="project" value="UniProtKB-UniRule"/>
</dbReference>
<dbReference type="GO" id="GO:0000049">
    <property type="term" value="F:tRNA binding"/>
    <property type="evidence" value="ECO:0007669"/>
    <property type="project" value="TreeGrafter"/>
</dbReference>
<dbReference type="GO" id="GO:0006430">
    <property type="term" value="P:lysyl-tRNA aminoacylation"/>
    <property type="evidence" value="ECO:0007669"/>
    <property type="project" value="UniProtKB-UniRule"/>
</dbReference>
<dbReference type="CDD" id="cd00775">
    <property type="entry name" value="LysRS_core"/>
    <property type="match status" value="1"/>
</dbReference>
<dbReference type="CDD" id="cd04322">
    <property type="entry name" value="LysRS_N"/>
    <property type="match status" value="1"/>
</dbReference>
<dbReference type="FunFam" id="2.40.50.140:FF:000024">
    <property type="entry name" value="Lysine--tRNA ligase"/>
    <property type="match status" value="1"/>
</dbReference>
<dbReference type="Gene3D" id="3.30.930.10">
    <property type="entry name" value="Bira Bifunctional Protein, Domain 2"/>
    <property type="match status" value="1"/>
</dbReference>
<dbReference type="Gene3D" id="2.40.50.140">
    <property type="entry name" value="Nucleic acid-binding proteins"/>
    <property type="match status" value="1"/>
</dbReference>
<dbReference type="HAMAP" id="MF_00252">
    <property type="entry name" value="Lys_tRNA_synth_class2"/>
    <property type="match status" value="1"/>
</dbReference>
<dbReference type="InterPro" id="IPR004364">
    <property type="entry name" value="Aa-tRNA-synt_II"/>
</dbReference>
<dbReference type="InterPro" id="IPR006195">
    <property type="entry name" value="aa-tRNA-synth_II"/>
</dbReference>
<dbReference type="InterPro" id="IPR045864">
    <property type="entry name" value="aa-tRNA-synth_II/BPL/LPL"/>
</dbReference>
<dbReference type="InterPro" id="IPR002313">
    <property type="entry name" value="Lys-tRNA-ligase_II"/>
</dbReference>
<dbReference type="InterPro" id="IPR034762">
    <property type="entry name" value="Lys-tRNA-ligase_II_bac/euk"/>
</dbReference>
<dbReference type="InterPro" id="IPR044136">
    <property type="entry name" value="Lys-tRNA-ligase_II_N"/>
</dbReference>
<dbReference type="InterPro" id="IPR018149">
    <property type="entry name" value="Lys-tRNA-synth_II_C"/>
</dbReference>
<dbReference type="InterPro" id="IPR012340">
    <property type="entry name" value="NA-bd_OB-fold"/>
</dbReference>
<dbReference type="InterPro" id="IPR004365">
    <property type="entry name" value="NA-bd_OB_tRNA"/>
</dbReference>
<dbReference type="NCBIfam" id="TIGR00499">
    <property type="entry name" value="lysS_bact"/>
    <property type="match status" value="1"/>
</dbReference>
<dbReference type="NCBIfam" id="NF001756">
    <property type="entry name" value="PRK00484.1"/>
    <property type="match status" value="1"/>
</dbReference>
<dbReference type="PANTHER" id="PTHR42918:SF15">
    <property type="entry name" value="LYSINE--TRNA LIGASE, CHLOROPLASTIC_MITOCHONDRIAL"/>
    <property type="match status" value="1"/>
</dbReference>
<dbReference type="PANTHER" id="PTHR42918">
    <property type="entry name" value="LYSYL-TRNA SYNTHETASE"/>
    <property type="match status" value="1"/>
</dbReference>
<dbReference type="Pfam" id="PF00152">
    <property type="entry name" value="tRNA-synt_2"/>
    <property type="match status" value="1"/>
</dbReference>
<dbReference type="Pfam" id="PF01336">
    <property type="entry name" value="tRNA_anti-codon"/>
    <property type="match status" value="1"/>
</dbReference>
<dbReference type="PIRSF" id="PIRSF039101">
    <property type="entry name" value="LysRS2"/>
    <property type="match status" value="1"/>
</dbReference>
<dbReference type="PRINTS" id="PR00982">
    <property type="entry name" value="TRNASYNTHLYS"/>
</dbReference>
<dbReference type="SUPFAM" id="SSF55681">
    <property type="entry name" value="Class II aaRS and biotin synthetases"/>
    <property type="match status" value="1"/>
</dbReference>
<dbReference type="SUPFAM" id="SSF50249">
    <property type="entry name" value="Nucleic acid-binding proteins"/>
    <property type="match status" value="1"/>
</dbReference>
<dbReference type="PROSITE" id="PS50862">
    <property type="entry name" value="AA_TRNA_LIGASE_II"/>
    <property type="match status" value="1"/>
</dbReference>
<keyword id="KW-0030">Aminoacyl-tRNA synthetase</keyword>
<keyword id="KW-0067">ATP-binding</keyword>
<keyword id="KW-0963">Cytoplasm</keyword>
<keyword id="KW-0436">Ligase</keyword>
<keyword id="KW-0460">Magnesium</keyword>
<keyword id="KW-0479">Metal-binding</keyword>
<keyword id="KW-0547">Nucleotide-binding</keyword>
<keyword id="KW-0648">Protein biosynthesis</keyword>
<keyword id="KW-1185">Reference proteome</keyword>
<accession>B7ID87</accession>
<proteinExistence type="inferred from homology"/>
<evidence type="ECO:0000255" key="1">
    <source>
        <dbReference type="HAMAP-Rule" id="MF_00252"/>
    </source>
</evidence>
<organism>
    <name type="scientific">Thermosipho africanus (strain TCF52B)</name>
    <dbReference type="NCBI Taxonomy" id="484019"/>
    <lineage>
        <taxon>Bacteria</taxon>
        <taxon>Thermotogati</taxon>
        <taxon>Thermotogota</taxon>
        <taxon>Thermotogae</taxon>
        <taxon>Thermotogales</taxon>
        <taxon>Fervidobacteriaceae</taxon>
        <taxon>Thermosipho</taxon>
    </lineage>
</organism>
<reference key="1">
    <citation type="journal article" date="2009" name="J. Bacteriol.">
        <title>The genome of Thermosipho africanus TCF52B: lateral genetic connections to the Firmicutes and Archaea.</title>
        <authorList>
            <person name="Nesboe C.L."/>
            <person name="Bapteste E."/>
            <person name="Curtis B."/>
            <person name="Dahle H."/>
            <person name="Lopez P."/>
            <person name="Macleod D."/>
            <person name="Dlutek M."/>
            <person name="Bowman S."/>
            <person name="Zhaxybayeva O."/>
            <person name="Birkeland N.-K."/>
            <person name="Doolittle W.F."/>
        </authorList>
    </citation>
    <scope>NUCLEOTIDE SEQUENCE [LARGE SCALE GENOMIC DNA]</scope>
    <source>
        <strain>TCF52B</strain>
    </source>
</reference>
<sequence>MLKEFREQRINEIKQISAKGVNPYPYKFEKTHSSQDIKAQFENLNPGEVKEDASVSTAGRIMSLRHHGKSAFFHIKDFFGRIQAYIRQDIVGKDVYEFFKEHIAIGDIVGVKGSVFKSKTGEVTILVKEIELLNKPLRPMPEKWHGIKDKEVLYRQRYVDMIANDETLNRFRIRFEIIKLIREFLNSKGFIEVETPILEYVTGGASARPFITHLNVFDIDMYMRIATELYLKRFIVGGFEKVYELGKNFRNEGLSYKHHPEFTSIEIYQAYADYEDMMNLTEELFVFIVEKLFGTTKVKYQDIEIDFSRPWRRVKMRDFIKEHLGVDILEDTEEKMLEVLKQHDVEVEIKDKGHLIEKLWDLVEDKVVQPTFLLEHPVEISPLAKKHREDPRVTERFELIIYGREMANAFSELNDPVDQYERFLRQAKLREAGDEEAQMMDKDFVRALEYGMPPTGGLGIGIDRLVMLLTNSPTIRDVIAFPLVRPISFEEEEMNLEGGSQE</sequence>
<feature type="chain" id="PRO_1000199250" description="Lysine--tRNA ligase">
    <location>
        <begin position="1"/>
        <end position="502"/>
    </location>
</feature>
<feature type="binding site" evidence="1">
    <location>
        <position position="398"/>
    </location>
    <ligand>
        <name>Mg(2+)</name>
        <dbReference type="ChEBI" id="CHEBI:18420"/>
        <label>1</label>
    </ligand>
</feature>
<feature type="binding site" evidence="1">
    <location>
        <position position="405"/>
    </location>
    <ligand>
        <name>Mg(2+)</name>
        <dbReference type="ChEBI" id="CHEBI:18420"/>
        <label>1</label>
    </ligand>
</feature>
<feature type="binding site" evidence="1">
    <location>
        <position position="405"/>
    </location>
    <ligand>
        <name>Mg(2+)</name>
        <dbReference type="ChEBI" id="CHEBI:18420"/>
        <label>2</label>
    </ligand>
</feature>
<protein>
    <recommendedName>
        <fullName evidence="1">Lysine--tRNA ligase</fullName>
        <ecNumber evidence="1">6.1.1.6</ecNumber>
    </recommendedName>
    <alternativeName>
        <fullName evidence="1">Lysyl-tRNA synthetase</fullName>
        <shortName evidence="1">LysRS</shortName>
    </alternativeName>
</protein>
<comment type="catalytic activity">
    <reaction evidence="1">
        <text>tRNA(Lys) + L-lysine + ATP = L-lysyl-tRNA(Lys) + AMP + diphosphate</text>
        <dbReference type="Rhea" id="RHEA:20792"/>
        <dbReference type="Rhea" id="RHEA-COMP:9696"/>
        <dbReference type="Rhea" id="RHEA-COMP:9697"/>
        <dbReference type="ChEBI" id="CHEBI:30616"/>
        <dbReference type="ChEBI" id="CHEBI:32551"/>
        <dbReference type="ChEBI" id="CHEBI:33019"/>
        <dbReference type="ChEBI" id="CHEBI:78442"/>
        <dbReference type="ChEBI" id="CHEBI:78529"/>
        <dbReference type="ChEBI" id="CHEBI:456215"/>
        <dbReference type="EC" id="6.1.1.6"/>
    </reaction>
</comment>
<comment type="cofactor">
    <cofactor evidence="1">
        <name>Mg(2+)</name>
        <dbReference type="ChEBI" id="CHEBI:18420"/>
    </cofactor>
    <text evidence="1">Binds 3 Mg(2+) ions per subunit.</text>
</comment>
<comment type="subunit">
    <text evidence="1">Homodimer.</text>
</comment>
<comment type="subcellular location">
    <subcellularLocation>
        <location evidence="1">Cytoplasm</location>
    </subcellularLocation>
</comment>
<comment type="similarity">
    <text evidence="1">Belongs to the class-II aminoacyl-tRNA synthetase family.</text>
</comment>
<name>SYK_THEAB</name>